<accession>Q8FF47</accession>
<reference key="1">
    <citation type="journal article" date="2002" name="Proc. Natl. Acad. Sci. U.S.A.">
        <title>Extensive mosaic structure revealed by the complete genome sequence of uropathogenic Escherichia coli.</title>
        <authorList>
            <person name="Welch R.A."/>
            <person name="Burland V."/>
            <person name="Plunkett G. III"/>
            <person name="Redford P."/>
            <person name="Roesch P."/>
            <person name="Rasko D."/>
            <person name="Buckles E.L."/>
            <person name="Liou S.-R."/>
            <person name="Boutin A."/>
            <person name="Hackett J."/>
            <person name="Stroud D."/>
            <person name="Mayhew G.F."/>
            <person name="Rose D.J."/>
            <person name="Zhou S."/>
            <person name="Schwartz D.C."/>
            <person name="Perna N.T."/>
            <person name="Mobley H.L.T."/>
            <person name="Donnenberg M.S."/>
            <person name="Blattner F.R."/>
        </authorList>
    </citation>
    <scope>NUCLEOTIDE SEQUENCE [LARGE SCALE GENOMIC DNA]</scope>
    <source>
        <strain>CFT073 / ATCC 700928 / UPEC</strain>
    </source>
</reference>
<feature type="chain" id="PRO_0000165835" description="Peptidase B">
    <location>
        <begin position="1"/>
        <end position="427"/>
    </location>
</feature>
<feature type="active site" evidence="1">
    <location>
        <position position="207"/>
    </location>
</feature>
<feature type="active site" evidence="1">
    <location>
        <position position="281"/>
    </location>
</feature>
<feature type="binding site" evidence="1">
    <location>
        <position position="195"/>
    </location>
    <ligand>
        <name>Mn(2+)</name>
        <dbReference type="ChEBI" id="CHEBI:29035"/>
        <label>2</label>
    </ligand>
</feature>
<feature type="binding site" evidence="1">
    <location>
        <position position="200"/>
    </location>
    <ligand>
        <name>Mn(2+)</name>
        <dbReference type="ChEBI" id="CHEBI:29035"/>
        <label>1</label>
    </ligand>
</feature>
<feature type="binding site" evidence="1">
    <location>
        <position position="200"/>
    </location>
    <ligand>
        <name>Mn(2+)</name>
        <dbReference type="ChEBI" id="CHEBI:29035"/>
        <label>2</label>
    </ligand>
</feature>
<feature type="binding site" evidence="1">
    <location>
        <position position="218"/>
    </location>
    <ligand>
        <name>Mn(2+)</name>
        <dbReference type="ChEBI" id="CHEBI:29035"/>
        <label>2</label>
    </ligand>
</feature>
<feature type="binding site" evidence="1">
    <location>
        <position position="277"/>
    </location>
    <ligand>
        <name>Mn(2+)</name>
        <dbReference type="ChEBI" id="CHEBI:29035"/>
        <label>1</label>
    </ligand>
</feature>
<feature type="binding site" evidence="1">
    <location>
        <position position="279"/>
    </location>
    <ligand>
        <name>Mn(2+)</name>
        <dbReference type="ChEBI" id="CHEBI:29035"/>
        <label>1</label>
    </ligand>
</feature>
<feature type="binding site" evidence="1">
    <location>
        <position position="279"/>
    </location>
    <ligand>
        <name>Mn(2+)</name>
        <dbReference type="ChEBI" id="CHEBI:29035"/>
        <label>2</label>
    </ligand>
</feature>
<protein>
    <recommendedName>
        <fullName evidence="1">Peptidase B</fullName>
        <ecNumber evidence="1">3.4.11.23</ecNumber>
    </recommendedName>
    <alternativeName>
        <fullName evidence="1">Aminopeptidase B</fullName>
    </alternativeName>
</protein>
<name>PEPB_ECOL6</name>
<organism>
    <name type="scientific">Escherichia coli O6:H1 (strain CFT073 / ATCC 700928 / UPEC)</name>
    <dbReference type="NCBI Taxonomy" id="199310"/>
    <lineage>
        <taxon>Bacteria</taxon>
        <taxon>Pseudomonadati</taxon>
        <taxon>Pseudomonadota</taxon>
        <taxon>Gammaproteobacteria</taxon>
        <taxon>Enterobacterales</taxon>
        <taxon>Enterobacteriaceae</taxon>
        <taxon>Escherichia</taxon>
    </lineage>
</organism>
<sequence>MTEAMKITLSPQPADARWGEKATYSINNDGITLHLNGADDLGLIQRAARKIDGLGIKHVQLSGEGWDADRCWAFWQGYKAPKGIRKVEWPDLDDAQRQELDNRLMIIDWVRDTINAPAEELGPSQLAQRAVDLISNVAGDRVTYRITKGEDLREQGYMGLHTVGRGSERSPVLLALDYNPTGDKEAPVYACLVGKGITFDSGGYSIKQTAFMDSMKSDMGGAATVTGALAFAITRGLNKRVKLFLCCADNLISGNAFKLGDIITYRNGKKVEVMNTDAEGRLVLADGLIDASAQKPELIIDAATLTGAAKTALGNDYHALFSFDDALAGRLLASAAQENEPFWRLPLAEFHRNQLPSNFAELNNTGSAAYPAGASTAAGFLSHFVENYQQGWLHIDCSATYRKAPVEQWSAGATGLGVRTIANLLTA</sequence>
<keyword id="KW-0031">Aminopeptidase</keyword>
<keyword id="KW-0963">Cytoplasm</keyword>
<keyword id="KW-0378">Hydrolase</keyword>
<keyword id="KW-0464">Manganese</keyword>
<keyword id="KW-0479">Metal-binding</keyword>
<keyword id="KW-0645">Protease</keyword>
<keyword id="KW-1185">Reference proteome</keyword>
<evidence type="ECO:0000255" key="1">
    <source>
        <dbReference type="HAMAP-Rule" id="MF_00504"/>
    </source>
</evidence>
<dbReference type="EC" id="3.4.11.23" evidence="1"/>
<dbReference type="EMBL" id="AE014075">
    <property type="protein sequence ID" value="AAN81498.1"/>
    <property type="molecule type" value="Genomic_DNA"/>
</dbReference>
<dbReference type="RefSeq" id="WP_000133524.1">
    <property type="nucleotide sequence ID" value="NZ_CP051263.1"/>
</dbReference>
<dbReference type="SMR" id="Q8FF47"/>
<dbReference type="STRING" id="199310.c3048"/>
<dbReference type="MEROPS" id="M17.004"/>
<dbReference type="KEGG" id="ecc:c3048"/>
<dbReference type="eggNOG" id="COG0260">
    <property type="taxonomic scope" value="Bacteria"/>
</dbReference>
<dbReference type="HOGENOM" id="CLU_013734_7_1_6"/>
<dbReference type="BioCyc" id="ECOL199310:C3048-MONOMER"/>
<dbReference type="Proteomes" id="UP000001410">
    <property type="component" value="Chromosome"/>
</dbReference>
<dbReference type="GO" id="GO:0005737">
    <property type="term" value="C:cytoplasm"/>
    <property type="evidence" value="ECO:0007669"/>
    <property type="project" value="UniProtKB-SubCell"/>
</dbReference>
<dbReference type="GO" id="GO:0030145">
    <property type="term" value="F:manganese ion binding"/>
    <property type="evidence" value="ECO:0007669"/>
    <property type="project" value="UniProtKB-UniRule"/>
</dbReference>
<dbReference type="GO" id="GO:0070006">
    <property type="term" value="F:metalloaminopeptidase activity"/>
    <property type="evidence" value="ECO:0007669"/>
    <property type="project" value="InterPro"/>
</dbReference>
<dbReference type="GO" id="GO:0006508">
    <property type="term" value="P:proteolysis"/>
    <property type="evidence" value="ECO:0007669"/>
    <property type="project" value="UniProtKB-UniRule"/>
</dbReference>
<dbReference type="CDD" id="cd00433">
    <property type="entry name" value="Peptidase_M17"/>
    <property type="match status" value="1"/>
</dbReference>
<dbReference type="FunFam" id="3.40.630.10:FF:000037">
    <property type="entry name" value="Peptidase B"/>
    <property type="match status" value="1"/>
</dbReference>
<dbReference type="Gene3D" id="3.40.630.10">
    <property type="entry name" value="Zn peptidases"/>
    <property type="match status" value="1"/>
</dbReference>
<dbReference type="HAMAP" id="MF_00504">
    <property type="entry name" value="Aminopeptidase_M17"/>
    <property type="match status" value="1"/>
</dbReference>
<dbReference type="InterPro" id="IPR011356">
    <property type="entry name" value="Leucine_aapep/pepB"/>
</dbReference>
<dbReference type="InterPro" id="IPR047620">
    <property type="entry name" value="M17_PepB-like_N"/>
</dbReference>
<dbReference type="InterPro" id="IPR008330">
    <property type="entry name" value="Pept_M17_PepB"/>
</dbReference>
<dbReference type="InterPro" id="IPR000819">
    <property type="entry name" value="Peptidase_M17_C"/>
</dbReference>
<dbReference type="NCBIfam" id="NF003450">
    <property type="entry name" value="PRK05015.1"/>
    <property type="match status" value="1"/>
</dbReference>
<dbReference type="PANTHER" id="PTHR11963">
    <property type="entry name" value="LEUCINE AMINOPEPTIDASE-RELATED"/>
    <property type="match status" value="1"/>
</dbReference>
<dbReference type="PANTHER" id="PTHR11963:SF20">
    <property type="entry name" value="PEPTIDASE B"/>
    <property type="match status" value="1"/>
</dbReference>
<dbReference type="Pfam" id="PF12404">
    <property type="entry name" value="DUF3663"/>
    <property type="match status" value="1"/>
</dbReference>
<dbReference type="Pfam" id="PF00883">
    <property type="entry name" value="Peptidase_M17"/>
    <property type="match status" value="1"/>
</dbReference>
<dbReference type="PIRSF" id="PIRSF036388">
    <property type="entry name" value="Ctsl_amnpptdse_B"/>
    <property type="match status" value="1"/>
</dbReference>
<dbReference type="PRINTS" id="PR00481">
    <property type="entry name" value="LAMNOPPTDASE"/>
</dbReference>
<dbReference type="SUPFAM" id="SSF53187">
    <property type="entry name" value="Zn-dependent exopeptidases"/>
    <property type="match status" value="1"/>
</dbReference>
<dbReference type="PROSITE" id="PS00631">
    <property type="entry name" value="CYTOSOL_AP"/>
    <property type="match status" value="1"/>
</dbReference>
<comment type="function">
    <text evidence="1">Probably plays an important role in intracellular peptide degradation.</text>
</comment>
<comment type="catalytic activity">
    <reaction evidence="1">
        <text>Release of an N-terminal amino acid, Xaa, from a peptide or arylamide. Xaa is preferably Glu or Asp but may be other amino acids, including Leu, Met, His, Cys and Gln.</text>
        <dbReference type="EC" id="3.4.11.23"/>
    </reaction>
</comment>
<comment type="cofactor">
    <cofactor evidence="1">
        <name>Mn(2+)</name>
        <dbReference type="ChEBI" id="CHEBI:29035"/>
    </cofactor>
    <text evidence="1">Binds 2 manganese ions per subunit.</text>
</comment>
<comment type="subunit">
    <text evidence="1">Homohexamer.</text>
</comment>
<comment type="subcellular location">
    <subcellularLocation>
        <location evidence="1">Cytoplasm</location>
    </subcellularLocation>
</comment>
<comment type="similarity">
    <text evidence="1">Belongs to the peptidase M17 family.</text>
</comment>
<gene>
    <name evidence="1" type="primary">pepB</name>
    <name type="ordered locus">c3048</name>
</gene>
<proteinExistence type="inferred from homology"/>